<gene>
    <name evidence="1" type="primary">lolD</name>
    <name type="ordered locus">TDE_2040</name>
</gene>
<reference key="1">
    <citation type="journal article" date="2004" name="Proc. Natl. Acad. Sci. U.S.A.">
        <title>Comparison of the genome of the oral pathogen Treponema denticola with other spirochete genomes.</title>
        <authorList>
            <person name="Seshadri R."/>
            <person name="Myers G.S.A."/>
            <person name="Tettelin H."/>
            <person name="Eisen J.A."/>
            <person name="Heidelberg J.F."/>
            <person name="Dodson R.J."/>
            <person name="Davidsen T.M."/>
            <person name="DeBoy R.T."/>
            <person name="Fouts D.E."/>
            <person name="Haft D.H."/>
            <person name="Selengut J."/>
            <person name="Ren Q."/>
            <person name="Brinkac L.M."/>
            <person name="Madupu R."/>
            <person name="Kolonay J.F."/>
            <person name="Durkin S.A."/>
            <person name="Daugherty S.C."/>
            <person name="Shetty J."/>
            <person name="Shvartsbeyn A."/>
            <person name="Gebregeorgis E."/>
            <person name="Geer K."/>
            <person name="Tsegaye G."/>
            <person name="Malek J.A."/>
            <person name="Ayodeji B."/>
            <person name="Shatsman S."/>
            <person name="McLeod M.P."/>
            <person name="Smajs D."/>
            <person name="Howell J.K."/>
            <person name="Pal S."/>
            <person name="Amin A."/>
            <person name="Vashisth P."/>
            <person name="McNeill T.Z."/>
            <person name="Xiang Q."/>
            <person name="Sodergren E."/>
            <person name="Baca E."/>
            <person name="Weinstock G.M."/>
            <person name="Norris S.J."/>
            <person name="Fraser C.M."/>
            <person name="Paulsen I.T."/>
        </authorList>
    </citation>
    <scope>NUCLEOTIDE SEQUENCE [LARGE SCALE GENOMIC DNA]</scope>
    <source>
        <strain>ATCC 35405 / DSM 14222 / CIP 103919 / JCM 8153 / KCTC 15104</strain>
    </source>
</reference>
<organism>
    <name type="scientific">Treponema denticola (strain ATCC 35405 / DSM 14222 / CIP 103919 / JCM 8153 / KCTC 15104)</name>
    <dbReference type="NCBI Taxonomy" id="243275"/>
    <lineage>
        <taxon>Bacteria</taxon>
        <taxon>Pseudomonadati</taxon>
        <taxon>Spirochaetota</taxon>
        <taxon>Spirochaetia</taxon>
        <taxon>Spirochaetales</taxon>
        <taxon>Treponemataceae</taxon>
        <taxon>Treponema</taxon>
    </lineage>
</organism>
<accession>Q73L25</accession>
<protein>
    <recommendedName>
        <fullName evidence="1">Lipoprotein-releasing system ATP-binding protein LolD</fullName>
        <ecNumber evidence="1">7.6.2.-</ecNumber>
    </recommendedName>
</protein>
<feature type="chain" id="PRO_0000272163" description="Lipoprotein-releasing system ATP-binding protein LolD">
    <location>
        <begin position="1"/>
        <end position="226"/>
    </location>
</feature>
<feature type="domain" description="ABC transporter" evidence="1">
    <location>
        <begin position="6"/>
        <end position="226"/>
    </location>
</feature>
<feature type="binding site" evidence="1">
    <location>
        <begin position="42"/>
        <end position="49"/>
    </location>
    <ligand>
        <name>ATP</name>
        <dbReference type="ChEBI" id="CHEBI:30616"/>
    </ligand>
</feature>
<evidence type="ECO:0000255" key="1">
    <source>
        <dbReference type="HAMAP-Rule" id="MF_01708"/>
    </source>
</evidence>
<name>LOLD_TREDE</name>
<proteinExistence type="inferred from homology"/>
<sequence length="226" mass="24778">MSKDIVLISGLTKTFSSASEKLVIFDKLNFSIEEGKKISITGESGSGKSTFLNILGGLESADSGEIIAGSYKVHSLDEKSLTEYRSSFLGLVFQFHYLLKDFTALENVMLPALIAGRSKKEIKEKALSLLEDVKLAERKNHFPSQLSGGERQRVAVARSLINSPSLILADEPTGNLDPANAETVQNLLFSVVDKHKKTLVLVTHDQNIASMTDISYKLYKGNLEEV</sequence>
<dbReference type="EC" id="7.6.2.-" evidence="1"/>
<dbReference type="EMBL" id="AE017226">
    <property type="protein sequence ID" value="AAS12554.1"/>
    <property type="molecule type" value="Genomic_DNA"/>
</dbReference>
<dbReference type="RefSeq" id="NP_972643.1">
    <property type="nucleotide sequence ID" value="NC_002967.9"/>
</dbReference>
<dbReference type="RefSeq" id="WP_002668339.1">
    <property type="nucleotide sequence ID" value="NC_002967.9"/>
</dbReference>
<dbReference type="SMR" id="Q73L25"/>
<dbReference type="STRING" id="243275.TDE_2040"/>
<dbReference type="PaxDb" id="243275-TDE_2040"/>
<dbReference type="GeneID" id="2740634"/>
<dbReference type="KEGG" id="tde:TDE_2040"/>
<dbReference type="PATRIC" id="fig|243275.7.peg.1925"/>
<dbReference type="eggNOG" id="COG1136">
    <property type="taxonomic scope" value="Bacteria"/>
</dbReference>
<dbReference type="HOGENOM" id="CLU_000604_1_22_12"/>
<dbReference type="OrthoDB" id="9805538at2"/>
<dbReference type="Proteomes" id="UP000008212">
    <property type="component" value="Chromosome"/>
</dbReference>
<dbReference type="GO" id="GO:0005886">
    <property type="term" value="C:plasma membrane"/>
    <property type="evidence" value="ECO:0007669"/>
    <property type="project" value="UniProtKB-SubCell"/>
</dbReference>
<dbReference type="GO" id="GO:0005524">
    <property type="term" value="F:ATP binding"/>
    <property type="evidence" value="ECO:0007669"/>
    <property type="project" value="UniProtKB-KW"/>
</dbReference>
<dbReference type="GO" id="GO:0016887">
    <property type="term" value="F:ATP hydrolysis activity"/>
    <property type="evidence" value="ECO:0007669"/>
    <property type="project" value="InterPro"/>
</dbReference>
<dbReference type="CDD" id="cd03255">
    <property type="entry name" value="ABC_MJ0796_LolCDE_FtsE"/>
    <property type="match status" value="1"/>
</dbReference>
<dbReference type="FunFam" id="3.40.50.300:FF:000056">
    <property type="entry name" value="Cell division ATP-binding protein FtsE"/>
    <property type="match status" value="1"/>
</dbReference>
<dbReference type="Gene3D" id="3.40.50.300">
    <property type="entry name" value="P-loop containing nucleotide triphosphate hydrolases"/>
    <property type="match status" value="1"/>
</dbReference>
<dbReference type="InterPro" id="IPR003593">
    <property type="entry name" value="AAA+_ATPase"/>
</dbReference>
<dbReference type="InterPro" id="IPR003439">
    <property type="entry name" value="ABC_transporter-like_ATP-bd"/>
</dbReference>
<dbReference type="InterPro" id="IPR017871">
    <property type="entry name" value="ABC_transporter-like_CS"/>
</dbReference>
<dbReference type="InterPro" id="IPR017911">
    <property type="entry name" value="MacB-like_ATP-bd"/>
</dbReference>
<dbReference type="InterPro" id="IPR027417">
    <property type="entry name" value="P-loop_NTPase"/>
</dbReference>
<dbReference type="PANTHER" id="PTHR42798:SF2">
    <property type="entry name" value="ABC TRANSPORTER ATP-BINDING PROTEIN MG467-RELATED"/>
    <property type="match status" value="1"/>
</dbReference>
<dbReference type="PANTHER" id="PTHR42798">
    <property type="entry name" value="LIPOPROTEIN-RELEASING SYSTEM ATP-BINDING PROTEIN LOLD"/>
    <property type="match status" value="1"/>
</dbReference>
<dbReference type="Pfam" id="PF00005">
    <property type="entry name" value="ABC_tran"/>
    <property type="match status" value="1"/>
</dbReference>
<dbReference type="SMART" id="SM00382">
    <property type="entry name" value="AAA"/>
    <property type="match status" value="1"/>
</dbReference>
<dbReference type="SUPFAM" id="SSF52540">
    <property type="entry name" value="P-loop containing nucleoside triphosphate hydrolases"/>
    <property type="match status" value="1"/>
</dbReference>
<dbReference type="PROSITE" id="PS00211">
    <property type="entry name" value="ABC_TRANSPORTER_1"/>
    <property type="match status" value="1"/>
</dbReference>
<dbReference type="PROSITE" id="PS50893">
    <property type="entry name" value="ABC_TRANSPORTER_2"/>
    <property type="match status" value="1"/>
</dbReference>
<dbReference type="PROSITE" id="PS51244">
    <property type="entry name" value="LOLD"/>
    <property type="match status" value="1"/>
</dbReference>
<comment type="function">
    <text evidence="1">Part of the ABC transporter complex LolCDE involved in the translocation of mature outer membrane-directed lipoproteins, from the inner membrane to the periplasmic chaperone, LolA. Responsible for the formation of the LolA-lipoprotein complex in an ATP-dependent manner.</text>
</comment>
<comment type="subunit">
    <text evidence="1">The complex is composed of two ATP-binding proteins (LolD) and two transmembrane proteins (LolC and LolE).</text>
</comment>
<comment type="subcellular location">
    <subcellularLocation>
        <location evidence="1">Cell inner membrane</location>
        <topology evidence="1">Peripheral membrane protein</topology>
    </subcellularLocation>
</comment>
<comment type="similarity">
    <text evidence="1">Belongs to the ABC transporter superfamily. Lipoprotein translocase (TC 3.A.1.125) family.</text>
</comment>
<keyword id="KW-0067">ATP-binding</keyword>
<keyword id="KW-0997">Cell inner membrane</keyword>
<keyword id="KW-1003">Cell membrane</keyword>
<keyword id="KW-0472">Membrane</keyword>
<keyword id="KW-0547">Nucleotide-binding</keyword>
<keyword id="KW-1185">Reference proteome</keyword>
<keyword id="KW-1278">Translocase</keyword>
<keyword id="KW-0813">Transport</keyword>